<gene>
    <name evidence="1" type="primary">glmM</name>
    <name type="ordered locus">sync_0325</name>
</gene>
<comment type="function">
    <text evidence="1">Catalyzes the conversion of glucosamine-6-phosphate to glucosamine-1-phosphate.</text>
</comment>
<comment type="catalytic activity">
    <reaction evidence="1">
        <text>alpha-D-glucosamine 1-phosphate = D-glucosamine 6-phosphate</text>
        <dbReference type="Rhea" id="RHEA:23424"/>
        <dbReference type="ChEBI" id="CHEBI:58516"/>
        <dbReference type="ChEBI" id="CHEBI:58725"/>
        <dbReference type="EC" id="5.4.2.10"/>
    </reaction>
</comment>
<comment type="cofactor">
    <cofactor evidence="1">
        <name>Mg(2+)</name>
        <dbReference type="ChEBI" id="CHEBI:18420"/>
    </cofactor>
    <text evidence="1">Binds 1 Mg(2+) ion per subunit.</text>
</comment>
<comment type="PTM">
    <text evidence="1">Activated by phosphorylation.</text>
</comment>
<comment type="similarity">
    <text evidence="1">Belongs to the phosphohexose mutase family.</text>
</comment>
<organism>
    <name type="scientific">Synechococcus sp. (strain CC9311)</name>
    <dbReference type="NCBI Taxonomy" id="64471"/>
    <lineage>
        <taxon>Bacteria</taxon>
        <taxon>Bacillati</taxon>
        <taxon>Cyanobacteriota</taxon>
        <taxon>Cyanophyceae</taxon>
        <taxon>Synechococcales</taxon>
        <taxon>Synechococcaceae</taxon>
        <taxon>Synechococcus</taxon>
    </lineage>
</organism>
<name>GLMM_SYNS3</name>
<dbReference type="EC" id="5.4.2.10" evidence="1"/>
<dbReference type="EMBL" id="CP000435">
    <property type="protein sequence ID" value="ABI47426.1"/>
    <property type="molecule type" value="Genomic_DNA"/>
</dbReference>
<dbReference type="SMR" id="Q0IDB3"/>
<dbReference type="STRING" id="64471.sync_0325"/>
<dbReference type="KEGG" id="syg:sync_0325"/>
<dbReference type="eggNOG" id="COG1109">
    <property type="taxonomic scope" value="Bacteria"/>
</dbReference>
<dbReference type="HOGENOM" id="CLU_016950_7_0_3"/>
<dbReference type="Proteomes" id="UP000001961">
    <property type="component" value="Chromosome"/>
</dbReference>
<dbReference type="GO" id="GO:0005829">
    <property type="term" value="C:cytosol"/>
    <property type="evidence" value="ECO:0007669"/>
    <property type="project" value="TreeGrafter"/>
</dbReference>
<dbReference type="GO" id="GO:0000287">
    <property type="term" value="F:magnesium ion binding"/>
    <property type="evidence" value="ECO:0007669"/>
    <property type="project" value="UniProtKB-UniRule"/>
</dbReference>
<dbReference type="GO" id="GO:0008966">
    <property type="term" value="F:phosphoglucosamine mutase activity"/>
    <property type="evidence" value="ECO:0007669"/>
    <property type="project" value="UniProtKB-UniRule"/>
</dbReference>
<dbReference type="GO" id="GO:0004615">
    <property type="term" value="F:phosphomannomutase activity"/>
    <property type="evidence" value="ECO:0007669"/>
    <property type="project" value="TreeGrafter"/>
</dbReference>
<dbReference type="GO" id="GO:0005975">
    <property type="term" value="P:carbohydrate metabolic process"/>
    <property type="evidence" value="ECO:0007669"/>
    <property type="project" value="InterPro"/>
</dbReference>
<dbReference type="GO" id="GO:0009252">
    <property type="term" value="P:peptidoglycan biosynthetic process"/>
    <property type="evidence" value="ECO:0007669"/>
    <property type="project" value="TreeGrafter"/>
</dbReference>
<dbReference type="GO" id="GO:0006048">
    <property type="term" value="P:UDP-N-acetylglucosamine biosynthetic process"/>
    <property type="evidence" value="ECO:0007669"/>
    <property type="project" value="TreeGrafter"/>
</dbReference>
<dbReference type="CDD" id="cd05802">
    <property type="entry name" value="GlmM"/>
    <property type="match status" value="1"/>
</dbReference>
<dbReference type="FunFam" id="3.30.310.50:FF:000001">
    <property type="entry name" value="Phosphoglucosamine mutase"/>
    <property type="match status" value="1"/>
</dbReference>
<dbReference type="FunFam" id="3.40.120.10:FF:000001">
    <property type="entry name" value="Phosphoglucosamine mutase"/>
    <property type="match status" value="1"/>
</dbReference>
<dbReference type="FunFam" id="3.40.120.10:FF:000002">
    <property type="entry name" value="Phosphoglucosamine mutase"/>
    <property type="match status" value="1"/>
</dbReference>
<dbReference type="Gene3D" id="3.40.120.10">
    <property type="entry name" value="Alpha-D-Glucose-1,6-Bisphosphate, subunit A, domain 3"/>
    <property type="match status" value="3"/>
</dbReference>
<dbReference type="Gene3D" id="3.30.310.50">
    <property type="entry name" value="Alpha-D-phosphohexomutase, C-terminal domain"/>
    <property type="match status" value="1"/>
</dbReference>
<dbReference type="HAMAP" id="MF_01554_B">
    <property type="entry name" value="GlmM_B"/>
    <property type="match status" value="1"/>
</dbReference>
<dbReference type="InterPro" id="IPR005844">
    <property type="entry name" value="A-D-PHexomutase_a/b/a-I"/>
</dbReference>
<dbReference type="InterPro" id="IPR016055">
    <property type="entry name" value="A-D-PHexomutase_a/b/a-I/II/III"/>
</dbReference>
<dbReference type="InterPro" id="IPR005845">
    <property type="entry name" value="A-D-PHexomutase_a/b/a-II"/>
</dbReference>
<dbReference type="InterPro" id="IPR005846">
    <property type="entry name" value="A-D-PHexomutase_a/b/a-III"/>
</dbReference>
<dbReference type="InterPro" id="IPR005843">
    <property type="entry name" value="A-D-PHexomutase_C"/>
</dbReference>
<dbReference type="InterPro" id="IPR036900">
    <property type="entry name" value="A-D-PHexomutase_C_sf"/>
</dbReference>
<dbReference type="InterPro" id="IPR016066">
    <property type="entry name" value="A-D-PHexomutase_CS"/>
</dbReference>
<dbReference type="InterPro" id="IPR005841">
    <property type="entry name" value="Alpha-D-phosphohexomutase_SF"/>
</dbReference>
<dbReference type="InterPro" id="IPR006352">
    <property type="entry name" value="GlmM_bact"/>
</dbReference>
<dbReference type="InterPro" id="IPR050060">
    <property type="entry name" value="Phosphoglucosamine_mutase"/>
</dbReference>
<dbReference type="NCBIfam" id="TIGR01455">
    <property type="entry name" value="glmM"/>
    <property type="match status" value="1"/>
</dbReference>
<dbReference type="PANTHER" id="PTHR42946:SF1">
    <property type="entry name" value="PHOSPHOGLUCOMUTASE (ALPHA-D-GLUCOSE-1,6-BISPHOSPHATE-DEPENDENT)"/>
    <property type="match status" value="1"/>
</dbReference>
<dbReference type="PANTHER" id="PTHR42946">
    <property type="entry name" value="PHOSPHOHEXOSE MUTASE"/>
    <property type="match status" value="1"/>
</dbReference>
<dbReference type="Pfam" id="PF02878">
    <property type="entry name" value="PGM_PMM_I"/>
    <property type="match status" value="1"/>
</dbReference>
<dbReference type="Pfam" id="PF02879">
    <property type="entry name" value="PGM_PMM_II"/>
    <property type="match status" value="1"/>
</dbReference>
<dbReference type="Pfam" id="PF02880">
    <property type="entry name" value="PGM_PMM_III"/>
    <property type="match status" value="1"/>
</dbReference>
<dbReference type="Pfam" id="PF00408">
    <property type="entry name" value="PGM_PMM_IV"/>
    <property type="match status" value="1"/>
</dbReference>
<dbReference type="PRINTS" id="PR00509">
    <property type="entry name" value="PGMPMM"/>
</dbReference>
<dbReference type="SUPFAM" id="SSF55957">
    <property type="entry name" value="Phosphoglucomutase, C-terminal domain"/>
    <property type="match status" value="1"/>
</dbReference>
<dbReference type="SUPFAM" id="SSF53738">
    <property type="entry name" value="Phosphoglucomutase, first 3 domains"/>
    <property type="match status" value="3"/>
</dbReference>
<dbReference type="PROSITE" id="PS00710">
    <property type="entry name" value="PGM_PMM"/>
    <property type="match status" value="1"/>
</dbReference>
<evidence type="ECO:0000255" key="1">
    <source>
        <dbReference type="HAMAP-Rule" id="MF_01554"/>
    </source>
</evidence>
<proteinExistence type="inferred from homology"/>
<keyword id="KW-0413">Isomerase</keyword>
<keyword id="KW-0460">Magnesium</keyword>
<keyword id="KW-0479">Metal-binding</keyword>
<keyword id="KW-0597">Phosphoprotein</keyword>
<keyword id="KW-1185">Reference proteome</keyword>
<feature type="chain" id="PRO_0000305684" description="Phosphoglucosamine mutase">
    <location>
        <begin position="1"/>
        <end position="455"/>
    </location>
</feature>
<feature type="active site" description="Phosphoserine intermediate" evidence="1">
    <location>
        <position position="104"/>
    </location>
</feature>
<feature type="binding site" description="via phosphate group" evidence="1">
    <location>
        <position position="104"/>
    </location>
    <ligand>
        <name>Mg(2+)</name>
        <dbReference type="ChEBI" id="CHEBI:18420"/>
    </ligand>
</feature>
<feature type="binding site" evidence="1">
    <location>
        <position position="243"/>
    </location>
    <ligand>
        <name>Mg(2+)</name>
        <dbReference type="ChEBI" id="CHEBI:18420"/>
    </ligand>
</feature>
<feature type="binding site" evidence="1">
    <location>
        <position position="245"/>
    </location>
    <ligand>
        <name>Mg(2+)</name>
        <dbReference type="ChEBI" id="CHEBI:18420"/>
    </ligand>
</feature>
<feature type="binding site" evidence="1">
    <location>
        <position position="247"/>
    </location>
    <ligand>
        <name>Mg(2+)</name>
        <dbReference type="ChEBI" id="CHEBI:18420"/>
    </ligand>
</feature>
<feature type="modified residue" description="Phosphoserine" evidence="1">
    <location>
        <position position="104"/>
    </location>
</feature>
<reference key="1">
    <citation type="journal article" date="2006" name="Proc. Natl. Acad. Sci. U.S.A.">
        <title>Genome sequence of Synechococcus CC9311: insights into adaptation to a coastal environment.</title>
        <authorList>
            <person name="Palenik B."/>
            <person name="Ren Q."/>
            <person name="Dupont C.L."/>
            <person name="Myers G.S."/>
            <person name="Heidelberg J.F."/>
            <person name="Badger J.H."/>
            <person name="Madupu R."/>
            <person name="Nelson W.C."/>
            <person name="Brinkac L.M."/>
            <person name="Dodson R.J."/>
            <person name="Durkin A.S."/>
            <person name="Daugherty S.C."/>
            <person name="Sullivan S.A."/>
            <person name="Khouri H."/>
            <person name="Mohamoud Y."/>
            <person name="Halpin R."/>
            <person name="Paulsen I.T."/>
        </authorList>
    </citation>
    <scope>NUCLEOTIDE SEQUENCE [LARGE SCALE GENOMIC DNA]</scope>
    <source>
        <strain>CC9311</strain>
    </source>
</reference>
<sequence length="455" mass="47625">MGQLPKPSKISFGTDGLRGRVDTMLTPALALQVGYWCGRVLQAEGPVLIGMDSRSSGSMLVAALTAGLTASGREVWTLGLCPTPAVPGLIRRYSAAGGLMVSASHNPPEDNGIKVFGATGSKLSPERQQAIEAGLCGGDGSGMALAASGAARHRPELLDDYRASLLSSVGQHRLDGVPIVLDLCWGSATACGAEVFSALGADLTVLHGDPDGTRINVNCGSTHLEALRRAVIEKGAAMGFGFDGDADRMLAVDGQGRVVDGDHVLFLWGSVLQEQGQLPDQRLVATVMSNLGFERAWQARGGLLDRTPVGDQHVHAEMVRTGAALGGEQSGHILSSAHGLAGDGVLTALQIASLCHAQQLSLAEWVDQSFQAYPQKLVNVRVENRERRKGWADCAPLSSLVQEAEASMAEDGRVLVRASGTEPLLRVMVEAADQAVVDHWTSSLAAAAELHLNAS</sequence>
<protein>
    <recommendedName>
        <fullName evidence="1">Phosphoglucosamine mutase</fullName>
        <ecNumber evidence="1">5.4.2.10</ecNumber>
    </recommendedName>
</protein>
<accession>Q0IDB3</accession>